<accession>Q95WA0</accession>
<reference key="1">
    <citation type="journal article" date="2001" name="J. Exp. Zool.">
        <title>Transcription pattern of ribosomal protein L26 during anoxia exposure in Littorina littorea.</title>
        <authorList>
            <person name="Larade K.F."/>
            <person name="Nimigan A."/>
            <person name="Storey K.B."/>
        </authorList>
    </citation>
    <scope>NUCLEOTIDE SEQUENCE [MRNA]</scope>
</reference>
<organism>
    <name type="scientific">Littorina littorea</name>
    <name type="common">Common periwinkle</name>
    <dbReference type="NCBI Taxonomy" id="31216"/>
    <lineage>
        <taxon>Eukaryota</taxon>
        <taxon>Metazoa</taxon>
        <taxon>Spiralia</taxon>
        <taxon>Lophotrochozoa</taxon>
        <taxon>Mollusca</taxon>
        <taxon>Gastropoda</taxon>
        <taxon>Caenogastropoda</taxon>
        <taxon>Littorinimorpha</taxon>
        <taxon>Littorinoidea</taxon>
        <taxon>Littorinidae</taxon>
        <taxon>Littorina</taxon>
    </lineage>
</organism>
<protein>
    <recommendedName>
        <fullName evidence="2">Large ribosomal subunit protein uL24</fullName>
    </recommendedName>
    <alternativeName>
        <fullName>60S ribosomal protein L26</fullName>
    </alternativeName>
</protein>
<name>RL26_LITLI</name>
<keyword id="KW-0687">Ribonucleoprotein</keyword>
<keyword id="KW-0689">Ribosomal protein</keyword>
<gene>
    <name type="primary">RPL26</name>
</gene>
<sequence>MKFNKMVSSDRGKNRKRHFNAPSHMRRKIMSSPMSKELRQKYNCRSMPIRKDDEVQVVRGHFKGQQVGKVVQVYRKKFVVHIERIQREKANGATVYVGIHPSKVLIVKLKMDKDRKRILDNKAKSRAKALAEKGKYTEETMETS</sequence>
<evidence type="ECO:0000256" key="1">
    <source>
        <dbReference type="SAM" id="MobiDB-lite"/>
    </source>
</evidence>
<evidence type="ECO:0000305" key="2"/>
<proteinExistence type="evidence at transcript level"/>
<feature type="chain" id="PRO_0000130796" description="Large ribosomal subunit protein uL24">
    <location>
        <begin position="1"/>
        <end position="144"/>
    </location>
</feature>
<feature type="region of interest" description="Disordered" evidence="1">
    <location>
        <begin position="1"/>
        <end position="22"/>
    </location>
</feature>
<feature type="compositionally biased region" description="Basic residues" evidence="1">
    <location>
        <begin position="13"/>
        <end position="22"/>
    </location>
</feature>
<comment type="similarity">
    <text evidence="2">Belongs to the universal ribosomal protein uL24 family.</text>
</comment>
<dbReference type="EMBL" id="AF358925">
    <property type="protein sequence ID" value="AAL27989.1"/>
    <property type="molecule type" value="mRNA"/>
</dbReference>
<dbReference type="SMR" id="Q95WA0"/>
<dbReference type="GO" id="GO:0015934">
    <property type="term" value="C:large ribosomal subunit"/>
    <property type="evidence" value="ECO:0007669"/>
    <property type="project" value="InterPro"/>
</dbReference>
<dbReference type="GO" id="GO:0003723">
    <property type="term" value="F:RNA binding"/>
    <property type="evidence" value="ECO:0007669"/>
    <property type="project" value="InterPro"/>
</dbReference>
<dbReference type="GO" id="GO:0003735">
    <property type="term" value="F:structural constituent of ribosome"/>
    <property type="evidence" value="ECO:0007669"/>
    <property type="project" value="InterPro"/>
</dbReference>
<dbReference type="GO" id="GO:0006412">
    <property type="term" value="P:translation"/>
    <property type="evidence" value="ECO:0007669"/>
    <property type="project" value="InterPro"/>
</dbReference>
<dbReference type="CDD" id="cd06089">
    <property type="entry name" value="KOW_RPL26"/>
    <property type="match status" value="1"/>
</dbReference>
<dbReference type="FunFam" id="2.30.30.30:FF:000009">
    <property type="entry name" value="60S ribosomal protein L26"/>
    <property type="match status" value="1"/>
</dbReference>
<dbReference type="Gene3D" id="2.30.30.30">
    <property type="match status" value="1"/>
</dbReference>
<dbReference type="InterPro" id="IPR005824">
    <property type="entry name" value="KOW"/>
</dbReference>
<dbReference type="InterPro" id="IPR014722">
    <property type="entry name" value="Rib_uL2_dom2"/>
</dbReference>
<dbReference type="InterPro" id="IPR005825">
    <property type="entry name" value="Ribosomal_uL24_CS"/>
</dbReference>
<dbReference type="InterPro" id="IPR005756">
    <property type="entry name" value="Ribosomal_uL24_euk/arc"/>
</dbReference>
<dbReference type="InterPro" id="IPR041988">
    <property type="entry name" value="Ribosomal_uL24_KOW"/>
</dbReference>
<dbReference type="InterPro" id="IPR008991">
    <property type="entry name" value="Translation_prot_SH3-like_sf"/>
</dbReference>
<dbReference type="NCBIfam" id="TIGR01080">
    <property type="entry name" value="rplX_A_E"/>
    <property type="match status" value="1"/>
</dbReference>
<dbReference type="PANTHER" id="PTHR11143">
    <property type="entry name" value="60S RIBOSOMAL PROTEIN L26 FAMILY MEMBER"/>
    <property type="match status" value="1"/>
</dbReference>
<dbReference type="Pfam" id="PF00467">
    <property type="entry name" value="KOW"/>
    <property type="match status" value="1"/>
</dbReference>
<dbReference type="Pfam" id="PF16906">
    <property type="entry name" value="Ribosomal_L26"/>
    <property type="match status" value="1"/>
</dbReference>
<dbReference type="SMART" id="SM00739">
    <property type="entry name" value="KOW"/>
    <property type="match status" value="1"/>
</dbReference>
<dbReference type="SUPFAM" id="SSF50104">
    <property type="entry name" value="Translation proteins SH3-like domain"/>
    <property type="match status" value="1"/>
</dbReference>
<dbReference type="PROSITE" id="PS01108">
    <property type="entry name" value="RIBOSOMAL_L24"/>
    <property type="match status" value="1"/>
</dbReference>